<proteinExistence type="inferred from homology"/>
<feature type="chain" id="PRO_0000307544" description="Triosephosphate isomerase">
    <location>
        <begin position="1"/>
        <end position="261"/>
    </location>
</feature>
<feature type="active site" description="Electrophile" evidence="1">
    <location>
        <position position="100"/>
    </location>
</feature>
<feature type="active site" description="Proton acceptor" evidence="1">
    <location>
        <position position="172"/>
    </location>
</feature>
<feature type="binding site" evidence="1">
    <location>
        <begin position="10"/>
        <end position="12"/>
    </location>
    <ligand>
        <name>substrate</name>
    </ligand>
</feature>
<feature type="binding site" evidence="1">
    <location>
        <position position="178"/>
    </location>
    <ligand>
        <name>substrate</name>
    </ligand>
</feature>
<feature type="binding site" evidence="1">
    <location>
        <position position="218"/>
    </location>
    <ligand>
        <name>substrate</name>
    </ligand>
</feature>
<feature type="binding site" evidence="1">
    <location>
        <begin position="239"/>
        <end position="240"/>
    </location>
    <ligand>
        <name>substrate</name>
    </ligand>
</feature>
<comment type="function">
    <text evidence="1">Involved in the gluconeogenesis. Catalyzes stereospecifically the conversion of dihydroxyacetone phosphate (DHAP) to D-glyceraldehyde-3-phosphate (G3P).</text>
</comment>
<comment type="catalytic activity">
    <reaction evidence="1">
        <text>D-glyceraldehyde 3-phosphate = dihydroxyacetone phosphate</text>
        <dbReference type="Rhea" id="RHEA:18585"/>
        <dbReference type="ChEBI" id="CHEBI:57642"/>
        <dbReference type="ChEBI" id="CHEBI:59776"/>
        <dbReference type="EC" id="5.3.1.1"/>
    </reaction>
</comment>
<comment type="pathway">
    <text evidence="1">Carbohydrate biosynthesis; gluconeogenesis.</text>
</comment>
<comment type="pathway">
    <text evidence="1">Carbohydrate degradation; glycolysis; D-glyceraldehyde 3-phosphate from glycerone phosphate: step 1/1.</text>
</comment>
<comment type="subunit">
    <text evidence="1">Homodimer.</text>
</comment>
<comment type="subcellular location">
    <subcellularLocation>
        <location evidence="1">Cytoplasm</location>
    </subcellularLocation>
</comment>
<comment type="similarity">
    <text evidence="1">Belongs to the triosephosphate isomerase family.</text>
</comment>
<reference key="1">
    <citation type="journal article" date="2006" name="Proc. Natl. Acad. Sci. U.S.A.">
        <title>The complete genome of Rhodococcus sp. RHA1 provides insights into a catabolic powerhouse.</title>
        <authorList>
            <person name="McLeod M.P."/>
            <person name="Warren R.L."/>
            <person name="Hsiao W.W.L."/>
            <person name="Araki N."/>
            <person name="Myhre M."/>
            <person name="Fernandes C."/>
            <person name="Miyazawa D."/>
            <person name="Wong W."/>
            <person name="Lillquist A.L."/>
            <person name="Wang D."/>
            <person name="Dosanjh M."/>
            <person name="Hara H."/>
            <person name="Petrescu A."/>
            <person name="Morin R.D."/>
            <person name="Yang G."/>
            <person name="Stott J.M."/>
            <person name="Schein J.E."/>
            <person name="Shin H."/>
            <person name="Smailus D."/>
            <person name="Siddiqui A.S."/>
            <person name="Marra M.A."/>
            <person name="Jones S.J.M."/>
            <person name="Holt R."/>
            <person name="Brinkman F.S.L."/>
            <person name="Miyauchi K."/>
            <person name="Fukuda M."/>
            <person name="Davies J.E."/>
            <person name="Mohn W.W."/>
            <person name="Eltis L.D."/>
        </authorList>
    </citation>
    <scope>NUCLEOTIDE SEQUENCE [LARGE SCALE GENOMIC DNA]</scope>
    <source>
        <strain>RHA1</strain>
    </source>
</reference>
<organism>
    <name type="scientific">Rhodococcus jostii (strain RHA1)</name>
    <dbReference type="NCBI Taxonomy" id="101510"/>
    <lineage>
        <taxon>Bacteria</taxon>
        <taxon>Bacillati</taxon>
        <taxon>Actinomycetota</taxon>
        <taxon>Actinomycetes</taxon>
        <taxon>Mycobacteriales</taxon>
        <taxon>Nocardiaceae</taxon>
        <taxon>Rhodococcus</taxon>
    </lineage>
</organism>
<gene>
    <name evidence="1" type="primary">tpiA</name>
    <name type="ordered locus">RHA1_ro07179</name>
</gene>
<evidence type="ECO:0000255" key="1">
    <source>
        <dbReference type="HAMAP-Rule" id="MF_00147"/>
    </source>
</evidence>
<protein>
    <recommendedName>
        <fullName evidence="1">Triosephosphate isomerase</fullName>
        <shortName evidence="1">TIM</shortName>
        <shortName evidence="1">TPI</shortName>
        <ecNumber evidence="1">5.3.1.1</ecNumber>
    </recommendedName>
    <alternativeName>
        <fullName evidence="1">Triose-phosphate isomerase</fullName>
    </alternativeName>
</protein>
<accession>Q0S0J3</accession>
<sequence length="261" mass="27114">MARKPLIAGNWKMNLNHLEAIALVQKIAFSLPAKYFDKVDVTVIPPFTDIRSVQTLVEGDKLLLTYGAQDVSAHDSGAYTGEISGSMLAKLGCTFVVVGHSERRTLHCEDNDTVLAKTKAALKNGITPIVCIGEGLDVREAGEHVSYNVEQLRGSLAGLSGEDIAKVVIAYEPVWAIGTGRVASAANAQEVCAAIRATLGELASQDVASGVRVLYGGSVNAKNVGEIVGQTDVDGALVGGASLKADEFATLSAIAAGGPLP</sequence>
<dbReference type="EC" id="5.3.1.1" evidence="1"/>
<dbReference type="EMBL" id="CP000431">
    <property type="protein sequence ID" value="ABG98943.1"/>
    <property type="molecule type" value="Genomic_DNA"/>
</dbReference>
<dbReference type="RefSeq" id="WP_011598877.1">
    <property type="nucleotide sequence ID" value="NC_008268.1"/>
</dbReference>
<dbReference type="SMR" id="Q0S0J3"/>
<dbReference type="KEGG" id="rha:RHA1_ro07179"/>
<dbReference type="PATRIC" id="fig|101510.16.peg.7233"/>
<dbReference type="eggNOG" id="COG0149">
    <property type="taxonomic scope" value="Bacteria"/>
</dbReference>
<dbReference type="HOGENOM" id="CLU_024251_2_3_11"/>
<dbReference type="OrthoDB" id="9809429at2"/>
<dbReference type="UniPathway" id="UPA00109">
    <property type="reaction ID" value="UER00189"/>
</dbReference>
<dbReference type="UniPathway" id="UPA00138"/>
<dbReference type="Proteomes" id="UP000008710">
    <property type="component" value="Chromosome"/>
</dbReference>
<dbReference type="GO" id="GO:0005829">
    <property type="term" value="C:cytosol"/>
    <property type="evidence" value="ECO:0007669"/>
    <property type="project" value="TreeGrafter"/>
</dbReference>
<dbReference type="GO" id="GO:0004807">
    <property type="term" value="F:triose-phosphate isomerase activity"/>
    <property type="evidence" value="ECO:0007669"/>
    <property type="project" value="UniProtKB-UniRule"/>
</dbReference>
<dbReference type="GO" id="GO:0006094">
    <property type="term" value="P:gluconeogenesis"/>
    <property type="evidence" value="ECO:0007669"/>
    <property type="project" value="UniProtKB-UniRule"/>
</dbReference>
<dbReference type="GO" id="GO:0046166">
    <property type="term" value="P:glyceraldehyde-3-phosphate biosynthetic process"/>
    <property type="evidence" value="ECO:0007669"/>
    <property type="project" value="TreeGrafter"/>
</dbReference>
<dbReference type="GO" id="GO:0019563">
    <property type="term" value="P:glycerol catabolic process"/>
    <property type="evidence" value="ECO:0007669"/>
    <property type="project" value="TreeGrafter"/>
</dbReference>
<dbReference type="GO" id="GO:0006096">
    <property type="term" value="P:glycolytic process"/>
    <property type="evidence" value="ECO:0007669"/>
    <property type="project" value="UniProtKB-UniRule"/>
</dbReference>
<dbReference type="CDD" id="cd00311">
    <property type="entry name" value="TIM"/>
    <property type="match status" value="1"/>
</dbReference>
<dbReference type="FunFam" id="3.20.20.70:FF:000020">
    <property type="entry name" value="Triosephosphate isomerase"/>
    <property type="match status" value="1"/>
</dbReference>
<dbReference type="Gene3D" id="3.20.20.70">
    <property type="entry name" value="Aldolase class I"/>
    <property type="match status" value="1"/>
</dbReference>
<dbReference type="HAMAP" id="MF_00147_B">
    <property type="entry name" value="TIM_B"/>
    <property type="match status" value="1"/>
</dbReference>
<dbReference type="InterPro" id="IPR013785">
    <property type="entry name" value="Aldolase_TIM"/>
</dbReference>
<dbReference type="InterPro" id="IPR035990">
    <property type="entry name" value="TIM_sf"/>
</dbReference>
<dbReference type="InterPro" id="IPR022896">
    <property type="entry name" value="TrioseP_Isoase_bac/euk"/>
</dbReference>
<dbReference type="InterPro" id="IPR000652">
    <property type="entry name" value="Triosephosphate_isomerase"/>
</dbReference>
<dbReference type="InterPro" id="IPR020861">
    <property type="entry name" value="Triosephosphate_isomerase_AS"/>
</dbReference>
<dbReference type="NCBIfam" id="TIGR00419">
    <property type="entry name" value="tim"/>
    <property type="match status" value="1"/>
</dbReference>
<dbReference type="PANTHER" id="PTHR21139">
    <property type="entry name" value="TRIOSEPHOSPHATE ISOMERASE"/>
    <property type="match status" value="1"/>
</dbReference>
<dbReference type="PANTHER" id="PTHR21139:SF42">
    <property type="entry name" value="TRIOSEPHOSPHATE ISOMERASE"/>
    <property type="match status" value="1"/>
</dbReference>
<dbReference type="Pfam" id="PF00121">
    <property type="entry name" value="TIM"/>
    <property type="match status" value="1"/>
</dbReference>
<dbReference type="SUPFAM" id="SSF51351">
    <property type="entry name" value="Triosephosphate isomerase (TIM)"/>
    <property type="match status" value="1"/>
</dbReference>
<dbReference type="PROSITE" id="PS00171">
    <property type="entry name" value="TIM_1"/>
    <property type="match status" value="1"/>
</dbReference>
<dbReference type="PROSITE" id="PS51440">
    <property type="entry name" value="TIM_2"/>
    <property type="match status" value="1"/>
</dbReference>
<keyword id="KW-0963">Cytoplasm</keyword>
<keyword id="KW-0312">Gluconeogenesis</keyword>
<keyword id="KW-0324">Glycolysis</keyword>
<keyword id="KW-0413">Isomerase</keyword>
<name>TPIS_RHOJR</name>